<gene>
    <name type="ordered locus">Sfum_2530</name>
</gene>
<dbReference type="EMBL" id="CP000478">
    <property type="protein sequence ID" value="ABK18208.1"/>
    <property type="molecule type" value="Genomic_DNA"/>
</dbReference>
<dbReference type="RefSeq" id="WP_011699376.1">
    <property type="nucleotide sequence ID" value="NC_008554.1"/>
</dbReference>
<dbReference type="SMR" id="A0LLA6"/>
<dbReference type="FunCoup" id="A0LLA6">
    <property type="interactions" value="122"/>
</dbReference>
<dbReference type="STRING" id="335543.Sfum_2530"/>
<dbReference type="KEGG" id="sfu:Sfum_2530"/>
<dbReference type="eggNOG" id="COG1058">
    <property type="taxonomic scope" value="Bacteria"/>
</dbReference>
<dbReference type="eggNOG" id="COG1546">
    <property type="taxonomic scope" value="Bacteria"/>
</dbReference>
<dbReference type="HOGENOM" id="CLU_030805_9_2_7"/>
<dbReference type="InParanoid" id="A0LLA6"/>
<dbReference type="Proteomes" id="UP000001784">
    <property type="component" value="Chromosome"/>
</dbReference>
<dbReference type="CDD" id="cd00885">
    <property type="entry name" value="cinA"/>
    <property type="match status" value="1"/>
</dbReference>
<dbReference type="Gene3D" id="3.30.70.2860">
    <property type="match status" value="1"/>
</dbReference>
<dbReference type="Gene3D" id="3.90.950.20">
    <property type="entry name" value="CinA-like"/>
    <property type="match status" value="1"/>
</dbReference>
<dbReference type="Gene3D" id="3.40.980.10">
    <property type="entry name" value="MoaB/Mog-like domain"/>
    <property type="match status" value="1"/>
</dbReference>
<dbReference type="HAMAP" id="MF_00226_B">
    <property type="entry name" value="CinA_B"/>
    <property type="match status" value="1"/>
</dbReference>
<dbReference type="InterPro" id="IPR050101">
    <property type="entry name" value="CinA"/>
</dbReference>
<dbReference type="InterPro" id="IPR036653">
    <property type="entry name" value="CinA-like_C"/>
</dbReference>
<dbReference type="InterPro" id="IPR008136">
    <property type="entry name" value="CinA_C"/>
</dbReference>
<dbReference type="InterPro" id="IPR041424">
    <property type="entry name" value="CinA_KH"/>
</dbReference>
<dbReference type="InterPro" id="IPR008135">
    <property type="entry name" value="Competence-induced_CinA"/>
</dbReference>
<dbReference type="InterPro" id="IPR036425">
    <property type="entry name" value="MoaB/Mog-like_dom_sf"/>
</dbReference>
<dbReference type="InterPro" id="IPR001453">
    <property type="entry name" value="MoaB/Mog_dom"/>
</dbReference>
<dbReference type="NCBIfam" id="TIGR00200">
    <property type="entry name" value="cinA_nterm"/>
    <property type="match status" value="1"/>
</dbReference>
<dbReference type="NCBIfam" id="TIGR00199">
    <property type="entry name" value="PncC_domain"/>
    <property type="match status" value="1"/>
</dbReference>
<dbReference type="PANTHER" id="PTHR13939">
    <property type="entry name" value="NICOTINAMIDE-NUCLEOTIDE AMIDOHYDROLASE PNCC"/>
    <property type="match status" value="1"/>
</dbReference>
<dbReference type="PANTHER" id="PTHR13939:SF0">
    <property type="entry name" value="NMN AMIDOHYDROLASE-LIKE PROTEIN YFAY"/>
    <property type="match status" value="1"/>
</dbReference>
<dbReference type="Pfam" id="PF02464">
    <property type="entry name" value="CinA"/>
    <property type="match status" value="1"/>
</dbReference>
<dbReference type="Pfam" id="PF18146">
    <property type="entry name" value="CinA_KH"/>
    <property type="match status" value="1"/>
</dbReference>
<dbReference type="Pfam" id="PF00994">
    <property type="entry name" value="MoCF_biosynth"/>
    <property type="match status" value="1"/>
</dbReference>
<dbReference type="PIRSF" id="PIRSF006728">
    <property type="entry name" value="CinA"/>
    <property type="match status" value="1"/>
</dbReference>
<dbReference type="SMART" id="SM00852">
    <property type="entry name" value="MoCF_biosynth"/>
    <property type="match status" value="1"/>
</dbReference>
<dbReference type="SUPFAM" id="SSF142433">
    <property type="entry name" value="CinA-like"/>
    <property type="match status" value="1"/>
</dbReference>
<dbReference type="SUPFAM" id="SSF53218">
    <property type="entry name" value="Molybdenum cofactor biosynthesis proteins"/>
    <property type="match status" value="1"/>
</dbReference>
<name>CINAL_SYNFM</name>
<protein>
    <recommendedName>
        <fullName evidence="1">CinA-like protein</fullName>
    </recommendedName>
</protein>
<organism>
    <name type="scientific">Syntrophobacter fumaroxidans (strain DSM 10017 / MPOB)</name>
    <dbReference type="NCBI Taxonomy" id="335543"/>
    <lineage>
        <taxon>Bacteria</taxon>
        <taxon>Pseudomonadati</taxon>
        <taxon>Thermodesulfobacteriota</taxon>
        <taxon>Syntrophobacteria</taxon>
        <taxon>Syntrophobacterales</taxon>
        <taxon>Syntrophobacteraceae</taxon>
        <taxon>Syntrophobacter</taxon>
    </lineage>
</organism>
<evidence type="ECO:0000255" key="1">
    <source>
        <dbReference type="HAMAP-Rule" id="MF_00226"/>
    </source>
</evidence>
<sequence length="424" mass="46447">MDERPPEISGSLLTIGDEILLGDILNGNARHIALELRNRGFRLDRMITVGDREEDIVSSLVLCLADARFIIVTGGLGPTDDDRTNAAVSRAFDRPLVADEAYVGRLKERLAERGQAWSNEVAKMAELPAGAVKIGLDMAGFFIDHGNVPCYFLPGVPGEMKFLLAEVVIPDLARRFPLRGAYLKEVVRVQGMVESEVNRRLRDLDCRRIGVEIGYLPQGSENWVTLFAVAASEEECRTRIEKVREEVVARLGEKHISGRNDECLEKVVGERLRERGWRMAAAESCTGGLLSTRLTSIAGSSDYFDRAFITYSNQAKQDHLGVSEEMLRVHGAVSEPVALAMAEGACRGARVEVALGITGIAGPAGGSAEKPVGTVCIACVTPKEKRVEKHRFEGVRESIRQSAAQAALLLLWRVLTDDSNLHCR</sequence>
<keyword id="KW-1185">Reference proteome</keyword>
<feature type="chain" id="PRO_0000336534" description="CinA-like protein">
    <location>
        <begin position="1"/>
        <end position="424"/>
    </location>
</feature>
<accession>A0LLA6</accession>
<proteinExistence type="inferred from homology"/>
<reference key="1">
    <citation type="submission" date="2006-10" db="EMBL/GenBank/DDBJ databases">
        <title>Complete sequence of Syntrophobacter fumaroxidans MPOB.</title>
        <authorList>
            <consortium name="US DOE Joint Genome Institute"/>
            <person name="Copeland A."/>
            <person name="Lucas S."/>
            <person name="Lapidus A."/>
            <person name="Barry K."/>
            <person name="Detter J.C."/>
            <person name="Glavina del Rio T."/>
            <person name="Hammon N."/>
            <person name="Israni S."/>
            <person name="Pitluck S."/>
            <person name="Goltsman E.G."/>
            <person name="Martinez M."/>
            <person name="Schmutz J."/>
            <person name="Larimer F."/>
            <person name="Land M."/>
            <person name="Hauser L."/>
            <person name="Kyrpides N."/>
            <person name="Kim E."/>
            <person name="Boone D.R."/>
            <person name="Brockman F."/>
            <person name="Culley D."/>
            <person name="Ferry J."/>
            <person name="Gunsalus R."/>
            <person name="McInerney M.J."/>
            <person name="Morrison M."/>
            <person name="Plugge C."/>
            <person name="Rohlin L."/>
            <person name="Scholten J."/>
            <person name="Sieber J."/>
            <person name="Stams A.J.M."/>
            <person name="Worm P."/>
            <person name="Henstra A.M."/>
            <person name="Richardson P."/>
        </authorList>
    </citation>
    <scope>NUCLEOTIDE SEQUENCE [LARGE SCALE GENOMIC DNA]</scope>
    <source>
        <strain>DSM 10017 / MPOB</strain>
    </source>
</reference>
<comment type="similarity">
    <text evidence="1">Belongs to the CinA family.</text>
</comment>